<name>RHAS_SALNS</name>
<proteinExistence type="inferred from homology"/>
<feature type="chain" id="PRO_1000200963" description="HTH-type transcriptional activator RhaS">
    <location>
        <begin position="1"/>
        <end position="278"/>
    </location>
</feature>
<feature type="domain" description="HTH araC/xylS-type" evidence="1">
    <location>
        <begin position="174"/>
        <end position="272"/>
    </location>
</feature>
<feature type="DNA-binding region" description="H-T-H motif" evidence="1">
    <location>
        <begin position="191"/>
        <end position="212"/>
    </location>
</feature>
<feature type="DNA-binding region" description="H-T-H motif" evidence="1">
    <location>
        <begin position="239"/>
        <end position="262"/>
    </location>
</feature>
<feature type="site" description="Interaction with sigma-70" evidence="1">
    <location>
        <position position="241"/>
    </location>
</feature>
<feature type="site" description="Interaction with sigma-70" evidence="1">
    <location>
        <position position="250"/>
    </location>
</feature>
<sequence>MTVLHSVDFFPSGKAPVAIEPRLPQAAFPEHHHDFHEIVIVEHGTGIHVFNGQPYTISGGTVCFVRDHDRHLYEHTDNLCLTNVLWRSPDAFQFLAGLDQLLPQEQDGYYPSHWRVNQSVLQQVRQLVGLMERAGDGMDAPAVANREILFMQLLVLLRRSSLMEGATNNDAKLNQLMAWLEDHFAEEVCWEAVAEQFSLSLRTLHRQLKQHTGLTPQRYLNRLRLIKARHLLRHSDHSVTEIAYRCGFGDSNHFSTLFRREFNWSPRDIRQGRDAIIQ</sequence>
<organism>
    <name type="scientific">Salmonella newport (strain SL254)</name>
    <dbReference type="NCBI Taxonomy" id="423368"/>
    <lineage>
        <taxon>Bacteria</taxon>
        <taxon>Pseudomonadati</taxon>
        <taxon>Pseudomonadota</taxon>
        <taxon>Gammaproteobacteria</taxon>
        <taxon>Enterobacterales</taxon>
        <taxon>Enterobacteriaceae</taxon>
        <taxon>Salmonella</taxon>
    </lineage>
</organism>
<reference key="1">
    <citation type="journal article" date="2011" name="J. Bacteriol.">
        <title>Comparative genomics of 28 Salmonella enterica isolates: evidence for CRISPR-mediated adaptive sublineage evolution.</title>
        <authorList>
            <person name="Fricke W.F."/>
            <person name="Mammel M.K."/>
            <person name="McDermott P.F."/>
            <person name="Tartera C."/>
            <person name="White D.G."/>
            <person name="Leclerc J.E."/>
            <person name="Ravel J."/>
            <person name="Cebula T.A."/>
        </authorList>
    </citation>
    <scope>NUCLEOTIDE SEQUENCE [LARGE SCALE GENOMIC DNA]</scope>
    <source>
        <strain>SL254</strain>
    </source>
</reference>
<comment type="function">
    <text evidence="1">Activates expression of the rhaBAD and rhaT operons.</text>
</comment>
<comment type="subunit">
    <text evidence="1">Binds DNA as a dimer.</text>
</comment>
<comment type="subcellular location">
    <subcellularLocation>
        <location evidence="1">Cytoplasm</location>
    </subcellularLocation>
</comment>
<protein>
    <recommendedName>
        <fullName evidence="1">HTH-type transcriptional activator RhaS</fullName>
    </recommendedName>
    <alternativeName>
        <fullName evidence="1">L-rhamnose operon regulatory protein RhaS</fullName>
    </alternativeName>
</protein>
<dbReference type="EMBL" id="CP001113">
    <property type="protein sequence ID" value="ACF62368.1"/>
    <property type="molecule type" value="Genomic_DNA"/>
</dbReference>
<dbReference type="RefSeq" id="WP_000217112.1">
    <property type="nucleotide sequence ID" value="NZ_CCMR01000001.1"/>
</dbReference>
<dbReference type="SMR" id="B4SZZ3"/>
<dbReference type="KEGG" id="see:SNSL254_A4331"/>
<dbReference type="HOGENOM" id="CLU_000445_88_5_6"/>
<dbReference type="Proteomes" id="UP000008824">
    <property type="component" value="Chromosome"/>
</dbReference>
<dbReference type="GO" id="GO:0005737">
    <property type="term" value="C:cytoplasm"/>
    <property type="evidence" value="ECO:0007669"/>
    <property type="project" value="UniProtKB-SubCell"/>
</dbReference>
<dbReference type="GO" id="GO:0003700">
    <property type="term" value="F:DNA-binding transcription factor activity"/>
    <property type="evidence" value="ECO:0007669"/>
    <property type="project" value="UniProtKB-UniRule"/>
</dbReference>
<dbReference type="GO" id="GO:0043565">
    <property type="term" value="F:sequence-specific DNA binding"/>
    <property type="evidence" value="ECO:0007669"/>
    <property type="project" value="InterPro"/>
</dbReference>
<dbReference type="GO" id="GO:0045893">
    <property type="term" value="P:positive regulation of DNA-templated transcription"/>
    <property type="evidence" value="ECO:0007669"/>
    <property type="project" value="UniProtKB-UniRule"/>
</dbReference>
<dbReference type="GO" id="GO:0019299">
    <property type="term" value="P:rhamnose metabolic process"/>
    <property type="evidence" value="ECO:0007669"/>
    <property type="project" value="UniProtKB-UniRule"/>
</dbReference>
<dbReference type="CDD" id="cd06977">
    <property type="entry name" value="cupin_RhaR_RhaS-like_N"/>
    <property type="match status" value="1"/>
</dbReference>
<dbReference type="Gene3D" id="1.10.10.60">
    <property type="entry name" value="Homeodomain-like"/>
    <property type="match status" value="1"/>
</dbReference>
<dbReference type="Gene3D" id="2.60.120.10">
    <property type="entry name" value="Jelly Rolls"/>
    <property type="match status" value="1"/>
</dbReference>
<dbReference type="HAMAP" id="MF_01534">
    <property type="entry name" value="HTH_type_RhaS"/>
    <property type="match status" value="1"/>
</dbReference>
<dbReference type="InterPro" id="IPR003313">
    <property type="entry name" value="AraC-bd"/>
</dbReference>
<dbReference type="InterPro" id="IPR050204">
    <property type="entry name" value="AraC_XylS_family_regulators"/>
</dbReference>
<dbReference type="InterPro" id="IPR009057">
    <property type="entry name" value="Homeodomain-like_sf"/>
</dbReference>
<dbReference type="InterPro" id="IPR037923">
    <property type="entry name" value="HTH-like"/>
</dbReference>
<dbReference type="InterPro" id="IPR018060">
    <property type="entry name" value="HTH_AraC"/>
</dbReference>
<dbReference type="InterPro" id="IPR018062">
    <property type="entry name" value="HTH_AraC-typ_CS"/>
</dbReference>
<dbReference type="InterPro" id="IPR047220">
    <property type="entry name" value="RhaR_RhaS-like_N"/>
</dbReference>
<dbReference type="InterPro" id="IPR014710">
    <property type="entry name" value="RmlC-like_jellyroll"/>
</dbReference>
<dbReference type="InterPro" id="IPR020449">
    <property type="entry name" value="Tscrpt_reg_AraC-type_HTH"/>
</dbReference>
<dbReference type="InterPro" id="IPR023609">
    <property type="entry name" value="Tscrpt_reg_HTH_RhaS"/>
</dbReference>
<dbReference type="NCBIfam" id="NF010028">
    <property type="entry name" value="PRK13503.1"/>
    <property type="match status" value="1"/>
</dbReference>
<dbReference type="PANTHER" id="PTHR46796:SF13">
    <property type="entry name" value="HTH-TYPE TRANSCRIPTIONAL ACTIVATOR RHAS"/>
    <property type="match status" value="1"/>
</dbReference>
<dbReference type="PANTHER" id="PTHR46796">
    <property type="entry name" value="HTH-TYPE TRANSCRIPTIONAL ACTIVATOR RHAS-RELATED"/>
    <property type="match status" value="1"/>
</dbReference>
<dbReference type="Pfam" id="PF02311">
    <property type="entry name" value="AraC_binding"/>
    <property type="match status" value="1"/>
</dbReference>
<dbReference type="Pfam" id="PF12833">
    <property type="entry name" value="HTH_18"/>
    <property type="match status" value="1"/>
</dbReference>
<dbReference type="PRINTS" id="PR00032">
    <property type="entry name" value="HTHARAC"/>
</dbReference>
<dbReference type="SMART" id="SM00342">
    <property type="entry name" value="HTH_ARAC"/>
    <property type="match status" value="1"/>
</dbReference>
<dbReference type="SUPFAM" id="SSF46689">
    <property type="entry name" value="Homeodomain-like"/>
    <property type="match status" value="2"/>
</dbReference>
<dbReference type="SUPFAM" id="SSF51215">
    <property type="entry name" value="Regulatory protein AraC"/>
    <property type="match status" value="1"/>
</dbReference>
<dbReference type="PROSITE" id="PS00041">
    <property type="entry name" value="HTH_ARAC_FAMILY_1"/>
    <property type="match status" value="1"/>
</dbReference>
<dbReference type="PROSITE" id="PS01124">
    <property type="entry name" value="HTH_ARAC_FAMILY_2"/>
    <property type="match status" value="1"/>
</dbReference>
<evidence type="ECO:0000255" key="1">
    <source>
        <dbReference type="HAMAP-Rule" id="MF_01534"/>
    </source>
</evidence>
<gene>
    <name evidence="1" type="primary">rhaS</name>
    <name type="ordered locus">SNSL254_A4331</name>
</gene>
<keyword id="KW-0010">Activator</keyword>
<keyword id="KW-0963">Cytoplasm</keyword>
<keyword id="KW-0238">DNA-binding</keyword>
<keyword id="KW-0677">Repeat</keyword>
<keyword id="KW-0684">Rhamnose metabolism</keyword>
<keyword id="KW-0804">Transcription</keyword>
<keyword id="KW-0805">Transcription regulation</keyword>
<accession>B4SZZ3</accession>